<sequence>MEENEYSGYWEPPRKRCCCARRGTQLMLVGLLSTAMWAGLLALLLLWHWETEKNLKQLGDTAIQNVSHVTKDLQKFQSNQLAQKSQVVQMSQNLQELQAEQKQMKAQDSRLSQNLTGLQEDLRNAQSQNSKLSQNLNRLQDDLVNIKSLGLNEKRTASDSLEKLQEEVAKLWIEILISKGTACNICPKNWLHFQQKCYYFGKGSKQWIQARFACSDLQGRLVSIHSQKEQDFLMQHINKKDSWIGLQDLNMEGEFVWSDGSPVGYSNWNPGEPNNGGQGEDCVMMRGSGQWNDAFCRSYLDAWVCEQLATCEISAPLASVTPTRPTPKSEP</sequence>
<dbReference type="EMBL" id="M99371">
    <property type="protein sequence ID" value="AAA74898.1"/>
    <property type="molecule type" value="mRNA"/>
</dbReference>
<dbReference type="EMBL" id="M34163">
    <property type="protein sequence ID" value="AAA37603.1"/>
    <property type="molecule type" value="mRNA"/>
</dbReference>
<dbReference type="EMBL" id="X64223">
    <property type="protein sequence ID" value="CAA45532.1"/>
    <property type="molecule type" value="mRNA"/>
</dbReference>
<dbReference type="EMBL" id="X64224">
    <property type="protein sequence ID" value="CAA45533.1"/>
    <property type="molecule type" value="mRNA"/>
</dbReference>
<dbReference type="CCDS" id="CCDS22071.1">
    <molecule id="P20693-1"/>
</dbReference>
<dbReference type="CCDS" id="CCDS85491.1">
    <molecule id="P20693-3"/>
</dbReference>
<dbReference type="CCDS" id="CCDS85494.1">
    <molecule id="P20693-2"/>
</dbReference>
<dbReference type="PIR" id="A43518">
    <property type="entry name" value="LNMSER"/>
</dbReference>
<dbReference type="RefSeq" id="NP_001240666.1">
    <molecule id="P20693-2"/>
    <property type="nucleotide sequence ID" value="NM_001253737.1"/>
</dbReference>
<dbReference type="RefSeq" id="NP_001240668.1">
    <molecule id="P20693-3"/>
    <property type="nucleotide sequence ID" value="NM_001253739.1"/>
</dbReference>
<dbReference type="RefSeq" id="NP_001240672.1">
    <property type="nucleotide sequence ID" value="NM_001253743.1"/>
</dbReference>
<dbReference type="RefSeq" id="NP_001240674.1">
    <property type="nucleotide sequence ID" value="NM_001253745.1"/>
</dbReference>
<dbReference type="RefSeq" id="NP_001240675.1">
    <property type="nucleotide sequence ID" value="NM_001253746.1"/>
</dbReference>
<dbReference type="RefSeq" id="NP_001240676.1">
    <property type="nucleotide sequence ID" value="NM_001253747.1"/>
</dbReference>
<dbReference type="RefSeq" id="NP_038545.1">
    <molecule id="P20693-1"/>
    <property type="nucleotide sequence ID" value="NM_013517.4"/>
</dbReference>
<dbReference type="SMR" id="P20693"/>
<dbReference type="FunCoup" id="P20693">
    <property type="interactions" value="430"/>
</dbReference>
<dbReference type="STRING" id="10090.ENSMUSP00000005678"/>
<dbReference type="GlyCosmos" id="P20693">
    <property type="glycosylation" value="2 sites, No reported glycans"/>
</dbReference>
<dbReference type="GlyGen" id="P20693">
    <property type="glycosylation" value="3 sites"/>
</dbReference>
<dbReference type="iPTMnet" id="P20693"/>
<dbReference type="PhosphoSitePlus" id="P20693"/>
<dbReference type="PaxDb" id="10090-ENSMUSP00000005678"/>
<dbReference type="ProteomicsDB" id="271728">
    <molecule id="P20693-1"/>
</dbReference>
<dbReference type="ProteomicsDB" id="271730">
    <molecule id="P20693-3"/>
</dbReference>
<dbReference type="Antibodypedia" id="2294">
    <property type="antibodies" value="1913 antibodies from 52 providers"/>
</dbReference>
<dbReference type="DNASU" id="14128"/>
<dbReference type="Ensembl" id="ENSMUST00000005678.6">
    <molecule id="P20693-1"/>
    <property type="protein sequence ID" value="ENSMUSP00000005678.5"/>
    <property type="gene ID" value="ENSMUSG00000005540.11"/>
</dbReference>
<dbReference type="Ensembl" id="ENSMUST00000208145.2">
    <molecule id="P20693-3"/>
    <property type="protein sequence ID" value="ENSMUSP00000146647.2"/>
    <property type="gene ID" value="ENSMUSG00000005540.11"/>
</dbReference>
<dbReference type="Ensembl" id="ENSMUST00000208492.2">
    <molecule id="P20693-2"/>
    <property type="protein sequence ID" value="ENSMUSP00000146568.2"/>
    <property type="gene ID" value="ENSMUSG00000005540.11"/>
</dbReference>
<dbReference type="GeneID" id="14128"/>
<dbReference type="KEGG" id="mmu:14128"/>
<dbReference type="UCSC" id="uc009ksl.1">
    <molecule id="P20693-3"/>
    <property type="organism name" value="mouse"/>
</dbReference>
<dbReference type="UCSC" id="uc009ksm.1">
    <molecule id="P20693-2"/>
    <property type="organism name" value="mouse"/>
</dbReference>
<dbReference type="UCSC" id="uc009ksn.1">
    <molecule id="P20693-1"/>
    <property type="organism name" value="mouse"/>
</dbReference>
<dbReference type="AGR" id="MGI:95497"/>
<dbReference type="CTD" id="14128"/>
<dbReference type="MGI" id="MGI:95497">
    <property type="gene designation" value="Fcer2a"/>
</dbReference>
<dbReference type="VEuPathDB" id="HostDB:ENSMUSG00000005540"/>
<dbReference type="eggNOG" id="KOG4297">
    <property type="taxonomic scope" value="Eukaryota"/>
</dbReference>
<dbReference type="GeneTree" id="ENSGT00940000162574"/>
<dbReference type="HOGENOM" id="CLU_049894_7_2_1"/>
<dbReference type="InParanoid" id="P20693"/>
<dbReference type="OMA" id="PRKRCCG"/>
<dbReference type="OrthoDB" id="418245at2759"/>
<dbReference type="PhylomeDB" id="P20693"/>
<dbReference type="TreeFam" id="TF333341"/>
<dbReference type="BioGRID-ORCS" id="14128">
    <property type="hits" value="2 hits in 77 CRISPR screens"/>
</dbReference>
<dbReference type="PRO" id="PR:P20693"/>
<dbReference type="Proteomes" id="UP000000589">
    <property type="component" value="Chromosome 8"/>
</dbReference>
<dbReference type="RNAct" id="P20693">
    <property type="molecule type" value="protein"/>
</dbReference>
<dbReference type="Bgee" id="ENSMUSG00000005540">
    <property type="expression patterns" value="Expressed in peripheral lymph node and 43 other cell types or tissues"/>
</dbReference>
<dbReference type="ExpressionAtlas" id="P20693">
    <property type="expression patterns" value="baseline and differential"/>
</dbReference>
<dbReference type="GO" id="GO:0009897">
    <property type="term" value="C:external side of plasma membrane"/>
    <property type="evidence" value="ECO:0000314"/>
    <property type="project" value="MGI"/>
</dbReference>
<dbReference type="GO" id="GO:0005576">
    <property type="term" value="C:extracellular region"/>
    <property type="evidence" value="ECO:0007669"/>
    <property type="project" value="UniProtKB-SubCell"/>
</dbReference>
<dbReference type="GO" id="GO:0030246">
    <property type="term" value="F:carbohydrate binding"/>
    <property type="evidence" value="ECO:0007669"/>
    <property type="project" value="UniProtKB-KW"/>
</dbReference>
<dbReference type="GO" id="GO:0019863">
    <property type="term" value="F:IgE binding"/>
    <property type="evidence" value="ECO:0007669"/>
    <property type="project" value="UniProtKB-KW"/>
</dbReference>
<dbReference type="GO" id="GO:0019769">
    <property type="term" value="F:low-affinity IgE receptor activity"/>
    <property type="evidence" value="ECO:0007669"/>
    <property type="project" value="Ensembl"/>
</dbReference>
<dbReference type="GO" id="GO:0046872">
    <property type="term" value="F:metal ion binding"/>
    <property type="evidence" value="ECO:0007669"/>
    <property type="project" value="UniProtKB-KW"/>
</dbReference>
<dbReference type="GO" id="GO:0002020">
    <property type="term" value="F:protease binding"/>
    <property type="evidence" value="ECO:0007669"/>
    <property type="project" value="Ensembl"/>
</dbReference>
<dbReference type="GO" id="GO:0002450">
    <property type="term" value="P:B cell antigen processing and presentation"/>
    <property type="evidence" value="ECO:0007669"/>
    <property type="project" value="Ensembl"/>
</dbReference>
<dbReference type="GO" id="GO:0042742">
    <property type="term" value="P:defense response to bacterium"/>
    <property type="evidence" value="ECO:0007669"/>
    <property type="project" value="Ensembl"/>
</dbReference>
<dbReference type="GO" id="GO:0160006">
    <property type="term" value="P:Fc receptor-mediated immune complex endocytosis"/>
    <property type="evidence" value="ECO:0007669"/>
    <property type="project" value="Ensembl"/>
</dbReference>
<dbReference type="GO" id="GO:0038096">
    <property type="term" value="P:Fc-gamma receptor signaling pathway involved in phagocytosis"/>
    <property type="evidence" value="ECO:0007669"/>
    <property type="project" value="Ensembl"/>
</dbReference>
<dbReference type="GO" id="GO:0042116">
    <property type="term" value="P:macrophage activation"/>
    <property type="evidence" value="ECO:0007669"/>
    <property type="project" value="Ensembl"/>
</dbReference>
<dbReference type="GO" id="GO:0010628">
    <property type="term" value="P:positive regulation of gene expression"/>
    <property type="evidence" value="ECO:0007669"/>
    <property type="project" value="Ensembl"/>
</dbReference>
<dbReference type="GO" id="GO:0002925">
    <property type="term" value="P:positive regulation of humoral immune response mediated by circulating immunoglobulin"/>
    <property type="evidence" value="ECO:0000315"/>
    <property type="project" value="MGI"/>
</dbReference>
<dbReference type="CDD" id="cd03590">
    <property type="entry name" value="CLECT_DC-SIGN_like"/>
    <property type="match status" value="1"/>
</dbReference>
<dbReference type="FunFam" id="3.10.100.10:FF:000070">
    <property type="entry name" value="Low affinity immunoglobulin epsilon Fc receptor"/>
    <property type="match status" value="1"/>
</dbReference>
<dbReference type="Gene3D" id="3.10.100.10">
    <property type="entry name" value="Mannose-Binding Protein A, subunit A"/>
    <property type="match status" value="1"/>
</dbReference>
<dbReference type="InterPro" id="IPR001304">
    <property type="entry name" value="C-type_lectin-like"/>
</dbReference>
<dbReference type="InterPro" id="IPR016186">
    <property type="entry name" value="C-type_lectin-like/link_sf"/>
</dbReference>
<dbReference type="InterPro" id="IPR050111">
    <property type="entry name" value="C-type_lectin/snaclec_domain"/>
</dbReference>
<dbReference type="InterPro" id="IPR018378">
    <property type="entry name" value="C-type_lectin_CS"/>
</dbReference>
<dbReference type="InterPro" id="IPR033989">
    <property type="entry name" value="CD209-like_CTLD"/>
</dbReference>
<dbReference type="InterPro" id="IPR016187">
    <property type="entry name" value="CTDL_fold"/>
</dbReference>
<dbReference type="PANTHER" id="PTHR22803">
    <property type="entry name" value="MANNOSE, PHOSPHOLIPASE, LECTIN RECEPTOR RELATED"/>
    <property type="match status" value="1"/>
</dbReference>
<dbReference type="Pfam" id="PF00059">
    <property type="entry name" value="Lectin_C"/>
    <property type="match status" value="1"/>
</dbReference>
<dbReference type="SMART" id="SM00034">
    <property type="entry name" value="CLECT"/>
    <property type="match status" value="1"/>
</dbReference>
<dbReference type="SUPFAM" id="SSF56436">
    <property type="entry name" value="C-type lectin-like"/>
    <property type="match status" value="1"/>
</dbReference>
<dbReference type="PROSITE" id="PS00615">
    <property type="entry name" value="C_TYPE_LECTIN_1"/>
    <property type="match status" value="1"/>
</dbReference>
<dbReference type="PROSITE" id="PS50041">
    <property type="entry name" value="C_TYPE_LECTIN_2"/>
    <property type="match status" value="1"/>
</dbReference>
<organism>
    <name type="scientific">Mus musculus</name>
    <name type="common">Mouse</name>
    <dbReference type="NCBI Taxonomy" id="10090"/>
    <lineage>
        <taxon>Eukaryota</taxon>
        <taxon>Metazoa</taxon>
        <taxon>Chordata</taxon>
        <taxon>Craniata</taxon>
        <taxon>Vertebrata</taxon>
        <taxon>Euteleostomi</taxon>
        <taxon>Mammalia</taxon>
        <taxon>Eutheria</taxon>
        <taxon>Euarchontoglires</taxon>
        <taxon>Glires</taxon>
        <taxon>Rodentia</taxon>
        <taxon>Myomorpha</taxon>
        <taxon>Muroidea</taxon>
        <taxon>Muridae</taxon>
        <taxon>Murinae</taxon>
        <taxon>Mus</taxon>
        <taxon>Mus</taxon>
    </lineage>
</organism>
<name>FCER2_MOUSE</name>
<keyword id="KW-0025">Alternative splicing</keyword>
<keyword id="KW-0106">Calcium</keyword>
<keyword id="KW-1003">Cell membrane</keyword>
<keyword id="KW-1015">Disulfide bond</keyword>
<keyword id="KW-0325">Glycoprotein</keyword>
<keyword id="KW-0389">IgE-binding protein</keyword>
<keyword id="KW-0430">Lectin</keyword>
<keyword id="KW-0449">Lipoprotein</keyword>
<keyword id="KW-0472">Membrane</keyword>
<keyword id="KW-0479">Metal-binding</keyword>
<keyword id="KW-0564">Palmitate</keyword>
<keyword id="KW-0654">Proteoglycan</keyword>
<keyword id="KW-0675">Receptor</keyword>
<keyword id="KW-1185">Reference proteome</keyword>
<keyword id="KW-0677">Repeat</keyword>
<keyword id="KW-0964">Secreted</keyword>
<keyword id="KW-0735">Signal-anchor</keyword>
<keyword id="KW-0812">Transmembrane</keyword>
<keyword id="KW-1133">Transmembrane helix</keyword>
<comment type="function">
    <text evidence="2">Low-affinity receptor for immunoglobulin E (IgE) and CR2/CD21. Has essential roles in the regulation of IgE production and in the differentiation of B cells. On B cells, initiates IgE-dependent antigen uptake and presentation to T cells. On macrophages, upon IgE binding and antigen cross-linking induces intracellular killing of parasites through activation of L-Arginine-nitric oxide pathway.</text>
</comment>
<comment type="subunit">
    <text evidence="2">Homotrimer. Interacts (via C-type lectin domain) with IGHE (via CH3 region); this interaction regulates IgE homeostasis. Interacts (via C-terminus) with CR2/CD21 (via Sushi domain 1 and 2).</text>
</comment>
<comment type="subcellular location">
    <subcellularLocation>
        <location evidence="1">Cell membrane</location>
        <topology evidence="1">Single-pass type II membrane protein</topology>
    </subcellularLocation>
    <subcellularLocation>
        <location evidence="1">Cell membrane</location>
        <topology evidence="1">Lipid-anchor</topology>
    </subcellularLocation>
    <subcellularLocation>
        <location evidence="2">Secreted</location>
    </subcellularLocation>
</comment>
<comment type="alternative products">
    <event type="alternative splicing"/>
    <isoform>
        <id>P20693-1</id>
        <name>1</name>
        <name>A</name>
        <sequence type="displayed"/>
    </isoform>
    <isoform>
        <id>P20693-2</id>
        <name>2</name>
        <name>B</name>
        <sequence type="described" ref="VSP_003058"/>
    </isoform>
    <isoform>
        <id>P20693-3</id>
        <name>3</name>
        <name>C</name>
        <sequence type="described" ref="VSP_003059"/>
    </isoform>
</comment>
<comment type="PTM">
    <text evidence="1">N- and O-glycosylated.</text>
</comment>
<comment type="miscellaneous">
    <text>There are two kinds of Fc receptors for IgE, which differ in both structure and function: high affinity receptors on basophils and mast cells and low affinity receptors on lymphocytes and monocytes.</text>
</comment>
<comment type="online information" name="Functional Glycomics Gateway - Glycan Binding">
    <link uri="http://www.functionalglycomics.org/glycomics/GBPServlet?&amp;operationType=view&amp;cbpId=cbp_mou_Ctlect_222"/>
    <text>CD23</text>
</comment>
<protein>
    <recommendedName>
        <fullName>Low affinity immunoglobulin epsilon Fc receptor</fullName>
    </recommendedName>
    <alternativeName>
        <fullName>Fc-epsilon-RII</fullName>
    </alternativeName>
    <alternativeName>
        <fullName>Lymphocyte IgE receptor</fullName>
    </alternativeName>
    <cdAntigenName>CD23</cdAntigenName>
</protein>
<evidence type="ECO:0000250" key="1"/>
<evidence type="ECO:0000250" key="2">
    <source>
        <dbReference type="UniProtKB" id="P06734"/>
    </source>
</evidence>
<evidence type="ECO:0000255" key="3"/>
<evidence type="ECO:0000255" key="4">
    <source>
        <dbReference type="PROSITE-ProRule" id="PRU00040"/>
    </source>
</evidence>
<evidence type="ECO:0000303" key="5">
    <source>
    </source>
</evidence>
<proteinExistence type="evidence at protein level"/>
<accession>P20693</accession>
<accession>Q61556</accession>
<accession>Q61557</accession>
<feature type="chain" id="PRO_0000046640" description="Low affinity immunoglobulin epsilon Fc receptor">
    <location>
        <begin position="1"/>
        <end position="331"/>
    </location>
</feature>
<feature type="topological domain" description="Cytoplasmic" evidence="3">
    <location>
        <begin position="1"/>
        <end position="23"/>
    </location>
</feature>
<feature type="transmembrane region" description="Helical; Signal-anchor for type II membrane protein" evidence="3">
    <location>
        <begin position="24"/>
        <end position="49"/>
    </location>
</feature>
<feature type="topological domain" description="Extracellular" evidence="3">
    <location>
        <begin position="50"/>
        <end position="331"/>
    </location>
</feature>
<feature type="repeat">
    <location>
        <begin position="71"/>
        <end position="91"/>
    </location>
</feature>
<feature type="repeat">
    <location>
        <begin position="92"/>
        <end position="112"/>
    </location>
</feature>
<feature type="repeat">
    <location>
        <begin position="113"/>
        <end position="133"/>
    </location>
</feature>
<feature type="domain" description="C-type lectin" evidence="4">
    <location>
        <begin position="185"/>
        <end position="298"/>
    </location>
</feature>
<feature type="binding site" evidence="1">
    <location>
        <position position="272"/>
    </location>
    <ligand>
        <name>Ca(2+)</name>
        <dbReference type="ChEBI" id="CHEBI:29108"/>
    </ligand>
</feature>
<feature type="binding site" evidence="1">
    <location>
        <position position="292"/>
    </location>
    <ligand>
        <name>Ca(2+)</name>
        <dbReference type="ChEBI" id="CHEBI:29108"/>
    </ligand>
</feature>
<feature type="binding site" evidence="1">
    <location>
        <position position="293"/>
    </location>
    <ligand>
        <name>Ca(2+)</name>
        <dbReference type="ChEBI" id="CHEBI:29108"/>
    </ligand>
</feature>
<feature type="lipid moiety-binding region" description="S-palmitoyl cysteine" evidence="1">
    <location>
        <position position="17"/>
    </location>
</feature>
<feature type="lipid moiety-binding region" description="S-palmitoyl cysteine" evidence="1">
    <location>
        <position position="18"/>
    </location>
</feature>
<feature type="glycosylation site" description="N-linked (GlcNAc...) asparagine" evidence="3">
    <location>
        <position position="65"/>
    </location>
</feature>
<feature type="glycosylation site" description="N-linked (GlcNAc...) asparagine" evidence="3">
    <location>
        <position position="114"/>
    </location>
</feature>
<feature type="glycosylation site" description="O-linked (Xyl...) (chondroitin sulfate) serine" evidence="2">
    <location>
        <position position="319"/>
    </location>
</feature>
<feature type="disulfide bond" evidence="4">
    <location>
        <begin position="183"/>
        <end position="311"/>
    </location>
</feature>
<feature type="disulfide bond" evidence="4">
    <location>
        <begin position="186"/>
        <end position="197"/>
    </location>
</feature>
<feature type="disulfide bond" evidence="4">
    <location>
        <begin position="214"/>
        <end position="305"/>
    </location>
</feature>
<feature type="disulfide bond" evidence="4">
    <location>
        <begin position="282"/>
        <end position="296"/>
    </location>
</feature>
<feature type="splice variant" id="VSP_003058" description="In isoform 2." evidence="5">
    <original>MEENEYS</original>
    <variation>MNSQNQ</variation>
    <location>
        <begin position="1"/>
        <end position="7"/>
    </location>
</feature>
<feature type="splice variant" id="VSP_003059" description="In isoform 3." evidence="5">
    <original>MEENEYS</original>
    <variation>MDTHHT</variation>
    <location>
        <begin position="1"/>
        <end position="7"/>
    </location>
</feature>
<gene>
    <name type="primary">Fcer2</name>
    <name type="synonym">Fcer2a</name>
</gene>
<reference key="1">
    <citation type="journal article" date="1989" name="Proc. Natl. Acad. Sci. U.S.A.">
        <title>Molecular structure and expression of the murine lymphocyte low-affinity receptor for IgE (Fc epsilon RII).</title>
        <authorList>
            <person name="Bettler B."/>
            <person name="Hofstetter H."/>
            <person name="Rao M."/>
            <person name="Yokoyama W.M."/>
            <person name="Kilchherr F."/>
            <person name="Conrad D.H."/>
        </authorList>
    </citation>
    <scope>NUCLEOTIDE SEQUENCE [MRNA] (ISOFORM 1)</scope>
</reference>
<reference key="2">
    <citation type="journal article" date="1990" name="J. Immunol.">
        <title>Isolation, characterization, and expression of cDNA clones encoding the mouse Fc receptor for IgE (Fc epsilon RII)1.</title>
        <authorList>
            <person name="Gollnick S.O."/>
            <person name="Trounstine M.L."/>
            <person name="Yamashita L.C."/>
            <person name="Kehry M.R."/>
            <person name="Moore K.W."/>
        </authorList>
    </citation>
    <scope>NUCLEOTIDE SEQUENCE [MRNA] (ISOFORM 1)</scope>
</reference>
<reference key="3">
    <citation type="journal article" date="1994" name="Int. Arch. Allergy Immunol.">
        <title>Cloning of cDNAs for new subtypes of murine low-affinity Fc receptor for IgE (Fc epsilon RII/CD23).</title>
        <authorList>
            <person name="Kondo H."/>
            <person name="Ichikawa Y."/>
            <person name="Nakamura K."/>
            <person name="Tsuchiya S."/>
        </authorList>
    </citation>
    <scope>NUCLEOTIDE SEQUENCE [MRNA] (ISOFORMS 2 AND 3)</scope>
    <source>
        <strain>DBA/2J</strain>
    </source>
</reference>
<reference key="4">
    <citation type="journal article" date="2010" name="Cell">
        <title>A tissue-specific atlas of mouse protein phosphorylation and expression.</title>
        <authorList>
            <person name="Huttlin E.L."/>
            <person name="Jedrychowski M.P."/>
            <person name="Elias J.E."/>
            <person name="Goswami T."/>
            <person name="Rad R."/>
            <person name="Beausoleil S.A."/>
            <person name="Villen J."/>
            <person name="Haas W."/>
            <person name="Sowa M.E."/>
            <person name="Gygi S.P."/>
        </authorList>
    </citation>
    <scope>IDENTIFICATION BY MASS SPECTROMETRY [LARGE SCALE ANALYSIS]</scope>
    <source>
        <tissue>Spleen</tissue>
    </source>
</reference>
<reference key="5">
    <citation type="journal article" date="1993" name="Receptor">
        <title>Modeling of the lectin-homology domains of the human and murine low-affinity Fc epsilon receptor (Fc epsilon RII/CD23).</title>
        <authorList>
            <person name="Padlan E.A."/>
            <person name="Helm B.A."/>
        </authorList>
    </citation>
    <scope>3D-STRUCTURE MODELING OF LECTIN DOMAIN</scope>
</reference>